<keyword id="KW-0002">3D-structure</keyword>
<keyword id="KW-1185">Reference proteome</keyword>
<gene>
    <name type="primary">yfgJ</name>
    <name type="ordered locus">b2510</name>
    <name type="ordered locus">JW5402</name>
</gene>
<sequence length="71" mass="7994">MELHCPQCQHVLDQDNGHARCRSCGEFIEMKALCPDCHQPLQVLKACGAVDYFCQHGHGLISKKRVEFVLA</sequence>
<accession>P76575</accession>
<accession>Q2MAH8</accession>
<evidence type="ECO:0007829" key="1">
    <source>
        <dbReference type="PDB" id="2JNE"/>
    </source>
</evidence>
<organism>
    <name type="scientific">Escherichia coli (strain K12)</name>
    <dbReference type="NCBI Taxonomy" id="83333"/>
    <lineage>
        <taxon>Bacteria</taxon>
        <taxon>Pseudomonadati</taxon>
        <taxon>Pseudomonadota</taxon>
        <taxon>Gammaproteobacteria</taxon>
        <taxon>Enterobacterales</taxon>
        <taxon>Enterobacteriaceae</taxon>
        <taxon>Escherichia</taxon>
    </lineage>
</organism>
<protein>
    <recommendedName>
        <fullName>Uncharacterized protein YfgJ</fullName>
    </recommendedName>
</protein>
<reference key="1">
    <citation type="journal article" date="1997" name="Science">
        <title>The complete genome sequence of Escherichia coli K-12.</title>
        <authorList>
            <person name="Blattner F.R."/>
            <person name="Plunkett G. III"/>
            <person name="Bloch C.A."/>
            <person name="Perna N.T."/>
            <person name="Burland V."/>
            <person name="Riley M."/>
            <person name="Collado-Vides J."/>
            <person name="Glasner J.D."/>
            <person name="Rode C.K."/>
            <person name="Mayhew G.F."/>
            <person name="Gregor J."/>
            <person name="Davis N.W."/>
            <person name="Kirkpatrick H.A."/>
            <person name="Goeden M.A."/>
            <person name="Rose D.J."/>
            <person name="Mau B."/>
            <person name="Shao Y."/>
        </authorList>
    </citation>
    <scope>NUCLEOTIDE SEQUENCE [LARGE SCALE GENOMIC DNA]</scope>
    <source>
        <strain>K12 / MG1655 / ATCC 47076</strain>
    </source>
</reference>
<reference key="2">
    <citation type="journal article" date="2006" name="Mol. Syst. Biol.">
        <title>Highly accurate genome sequences of Escherichia coli K-12 strains MG1655 and W3110.</title>
        <authorList>
            <person name="Hayashi K."/>
            <person name="Morooka N."/>
            <person name="Yamamoto Y."/>
            <person name="Fujita K."/>
            <person name="Isono K."/>
            <person name="Choi S."/>
            <person name="Ohtsubo E."/>
            <person name="Baba T."/>
            <person name="Wanner B.L."/>
            <person name="Mori H."/>
            <person name="Horiuchi T."/>
        </authorList>
    </citation>
    <scope>NUCLEOTIDE SEQUENCE [LARGE SCALE GENOMIC DNA]</scope>
    <source>
        <strain>K12 / W3110 / ATCC 27325 / DSM 5911</strain>
    </source>
</reference>
<dbReference type="EMBL" id="U00096">
    <property type="protein sequence ID" value="AAC75563.2"/>
    <property type="molecule type" value="Genomic_DNA"/>
</dbReference>
<dbReference type="EMBL" id="AP009048">
    <property type="protein sequence ID" value="BAE76728.1"/>
    <property type="molecule type" value="Genomic_DNA"/>
</dbReference>
<dbReference type="PIR" id="E65027">
    <property type="entry name" value="E65027"/>
</dbReference>
<dbReference type="RefSeq" id="NP_417005.2">
    <property type="nucleotide sequence ID" value="NC_000913.3"/>
</dbReference>
<dbReference type="RefSeq" id="WP_001301158.1">
    <property type="nucleotide sequence ID" value="NZ_LN832404.1"/>
</dbReference>
<dbReference type="PDB" id="2JNE">
    <property type="method" value="NMR"/>
    <property type="chains" value="A=1-71"/>
</dbReference>
<dbReference type="PDBsum" id="2JNE"/>
<dbReference type="BMRB" id="P76575"/>
<dbReference type="SMR" id="P76575"/>
<dbReference type="BioGRID" id="4263150">
    <property type="interactions" value="4"/>
</dbReference>
<dbReference type="FunCoup" id="P76575">
    <property type="interactions" value="85"/>
</dbReference>
<dbReference type="STRING" id="511145.b2510"/>
<dbReference type="jPOST" id="P76575"/>
<dbReference type="PaxDb" id="511145-b2510"/>
<dbReference type="EnsemblBacteria" id="AAC75563">
    <property type="protein sequence ID" value="AAC75563"/>
    <property type="gene ID" value="b2510"/>
</dbReference>
<dbReference type="GeneID" id="946984"/>
<dbReference type="KEGG" id="ecj:JW5402"/>
<dbReference type="KEGG" id="eco:b2510"/>
<dbReference type="KEGG" id="ecoc:C3026_13920"/>
<dbReference type="PATRIC" id="fig|511145.12.peg.2609"/>
<dbReference type="EchoBASE" id="EB3958"/>
<dbReference type="eggNOG" id="COG1645">
    <property type="taxonomic scope" value="Bacteria"/>
</dbReference>
<dbReference type="HOGENOM" id="CLU_184340_0_0_6"/>
<dbReference type="InParanoid" id="P76575"/>
<dbReference type="OMA" id="SRVRFEF"/>
<dbReference type="OrthoDB" id="5405751at2"/>
<dbReference type="PhylomeDB" id="P76575"/>
<dbReference type="BioCyc" id="EcoCyc:G7318-MONOMER"/>
<dbReference type="EvolutionaryTrace" id="P76575"/>
<dbReference type="PRO" id="PR:P76575"/>
<dbReference type="Proteomes" id="UP000000625">
    <property type="component" value="Chromosome"/>
</dbReference>
<dbReference type="GO" id="GO:0071978">
    <property type="term" value="P:bacterial-type flagellum-dependent swarming motility"/>
    <property type="evidence" value="ECO:0000315"/>
    <property type="project" value="EcoCyc"/>
</dbReference>
<dbReference type="FunFam" id="2.10.290.10:FF:000001">
    <property type="entry name" value="PF07191 family protein"/>
    <property type="match status" value="1"/>
</dbReference>
<dbReference type="Gene3D" id="2.10.290.10">
    <property type="entry name" value="YfgJ-like"/>
    <property type="match status" value="1"/>
</dbReference>
<dbReference type="InterPro" id="IPR029037">
    <property type="entry name" value="DUF1407/YfgJ-like_sf"/>
</dbReference>
<dbReference type="InterPro" id="IPR010807">
    <property type="entry name" value="YfgJ-like"/>
</dbReference>
<dbReference type="Pfam" id="PF07191">
    <property type="entry name" value="Zn_ribbon_6"/>
    <property type="match status" value="1"/>
</dbReference>
<dbReference type="SUPFAM" id="SSF161187">
    <property type="entry name" value="YfgJ-like"/>
    <property type="match status" value="1"/>
</dbReference>
<proteinExistence type="evidence at protein level"/>
<name>YFGJ_ECOLI</name>
<feature type="chain" id="PRO_0000169246" description="Uncharacterized protein YfgJ">
    <location>
        <begin position="1"/>
        <end position="71"/>
    </location>
</feature>
<feature type="strand" evidence="1">
    <location>
        <begin position="6"/>
        <end position="8"/>
    </location>
</feature>
<feature type="strand" evidence="1">
    <location>
        <begin position="10"/>
        <end position="15"/>
    </location>
</feature>
<feature type="strand" evidence="1">
    <location>
        <begin position="18"/>
        <end position="21"/>
    </location>
</feature>
<feature type="turn" evidence="1">
    <location>
        <begin position="22"/>
        <end position="24"/>
    </location>
</feature>
<feature type="strand" evidence="1">
    <location>
        <begin position="27"/>
        <end position="33"/>
    </location>
</feature>
<feature type="turn" evidence="1">
    <location>
        <begin position="35"/>
        <end position="37"/>
    </location>
</feature>
<feature type="strand" evidence="1">
    <location>
        <begin position="42"/>
        <end position="46"/>
    </location>
</feature>
<feature type="strand" evidence="1">
    <location>
        <begin position="49"/>
        <end position="53"/>
    </location>
</feature>
<feature type="turn" evidence="1">
    <location>
        <begin position="63"/>
        <end position="65"/>
    </location>
</feature>
<feature type="strand" evidence="1">
    <location>
        <begin position="66"/>
        <end position="70"/>
    </location>
</feature>